<accession>Q6EJB6</accession>
<accession>Q6EJB5</accession>
<accession>Q8BL60</accession>
<feature type="chain" id="PRO_0000065735" description="U3 small nucleolar RNA-associated protein 14 homolog B">
    <location>
        <begin position="1"/>
        <end position="756"/>
    </location>
</feature>
<feature type="region of interest" description="Disordered" evidence="4">
    <location>
        <begin position="21"/>
        <end position="44"/>
    </location>
</feature>
<feature type="region of interest" description="Disordered" evidence="4">
    <location>
        <begin position="419"/>
        <end position="468"/>
    </location>
</feature>
<feature type="region of interest" description="Disordered" evidence="4">
    <location>
        <begin position="497"/>
        <end position="539"/>
    </location>
</feature>
<feature type="coiled-coil region" evidence="3">
    <location>
        <begin position="215"/>
        <end position="244"/>
    </location>
</feature>
<feature type="coiled-coil region" evidence="3">
    <location>
        <begin position="316"/>
        <end position="345"/>
    </location>
</feature>
<feature type="coiled-coil region" evidence="3">
    <location>
        <begin position="449"/>
        <end position="476"/>
    </location>
</feature>
<feature type="compositionally biased region" description="Basic and acidic residues" evidence="4">
    <location>
        <begin position="419"/>
        <end position="428"/>
    </location>
</feature>
<feature type="compositionally biased region" description="Basic and acidic residues" evidence="4">
    <location>
        <begin position="452"/>
        <end position="468"/>
    </location>
</feature>
<feature type="modified residue" description="Phosphoserine" evidence="2">
    <location>
        <position position="29"/>
    </location>
</feature>
<feature type="modified residue" description="Phosphoserine" evidence="2">
    <location>
        <position position="31"/>
    </location>
</feature>
<feature type="modified residue" description="Phosphoserine" evidence="2">
    <location>
        <position position="37"/>
    </location>
</feature>
<feature type="modified residue" description="Phosphoserine" evidence="8">
    <location>
        <position position="554"/>
    </location>
</feature>
<feature type="sequence conflict" description="In Ref. 2; BAC32659." evidence="7" ref="2">
    <original>L</original>
    <variation>F</variation>
    <location>
        <position position="731"/>
    </location>
</feature>
<proteinExistence type="evidence at protein level"/>
<reference key="1">
    <citation type="journal article" date="2004" name="Nat. Genet.">
        <title>An X-to-autosome retrogene is required for spermatogenesis in mice.</title>
        <authorList>
            <person name="Bradley J."/>
            <person name="Baltus A."/>
            <person name="Skaletsky H."/>
            <person name="Royce-Tolland M."/>
            <person name="Dewar K."/>
            <person name="Page D.C."/>
        </authorList>
    </citation>
    <scope>NUCLEOTIDE SEQUENCE [MRNA]</scope>
    <scope>FUNCTION</scope>
    <scope>TISSUE SPECIFICITY</scope>
    <scope>GENOMIC ORGANIZATION</scope>
    <scope>CHROMOSOMAL LOCATION</scope>
</reference>
<reference key="2">
    <citation type="journal article" date="2005" name="Science">
        <title>The transcriptional landscape of the mammalian genome.</title>
        <authorList>
            <person name="Carninci P."/>
            <person name="Kasukawa T."/>
            <person name="Katayama S."/>
            <person name="Gough J."/>
            <person name="Frith M.C."/>
            <person name="Maeda N."/>
            <person name="Oyama R."/>
            <person name="Ravasi T."/>
            <person name="Lenhard B."/>
            <person name="Wells C."/>
            <person name="Kodzius R."/>
            <person name="Shimokawa K."/>
            <person name="Bajic V.B."/>
            <person name="Brenner S.E."/>
            <person name="Batalov S."/>
            <person name="Forrest A.R."/>
            <person name="Zavolan M."/>
            <person name="Davis M.J."/>
            <person name="Wilming L.G."/>
            <person name="Aidinis V."/>
            <person name="Allen J.E."/>
            <person name="Ambesi-Impiombato A."/>
            <person name="Apweiler R."/>
            <person name="Aturaliya R.N."/>
            <person name="Bailey T.L."/>
            <person name="Bansal M."/>
            <person name="Baxter L."/>
            <person name="Beisel K.W."/>
            <person name="Bersano T."/>
            <person name="Bono H."/>
            <person name="Chalk A.M."/>
            <person name="Chiu K.P."/>
            <person name="Choudhary V."/>
            <person name="Christoffels A."/>
            <person name="Clutterbuck D.R."/>
            <person name="Crowe M.L."/>
            <person name="Dalla E."/>
            <person name="Dalrymple B.P."/>
            <person name="de Bono B."/>
            <person name="Della Gatta G."/>
            <person name="di Bernardo D."/>
            <person name="Down T."/>
            <person name="Engstrom P."/>
            <person name="Fagiolini M."/>
            <person name="Faulkner G."/>
            <person name="Fletcher C.F."/>
            <person name="Fukushima T."/>
            <person name="Furuno M."/>
            <person name="Futaki S."/>
            <person name="Gariboldi M."/>
            <person name="Georgii-Hemming P."/>
            <person name="Gingeras T.R."/>
            <person name="Gojobori T."/>
            <person name="Green R.E."/>
            <person name="Gustincich S."/>
            <person name="Harbers M."/>
            <person name="Hayashi Y."/>
            <person name="Hensch T.K."/>
            <person name="Hirokawa N."/>
            <person name="Hill D."/>
            <person name="Huminiecki L."/>
            <person name="Iacono M."/>
            <person name="Ikeo K."/>
            <person name="Iwama A."/>
            <person name="Ishikawa T."/>
            <person name="Jakt M."/>
            <person name="Kanapin A."/>
            <person name="Katoh M."/>
            <person name="Kawasawa Y."/>
            <person name="Kelso J."/>
            <person name="Kitamura H."/>
            <person name="Kitano H."/>
            <person name="Kollias G."/>
            <person name="Krishnan S.P."/>
            <person name="Kruger A."/>
            <person name="Kummerfeld S.K."/>
            <person name="Kurochkin I.V."/>
            <person name="Lareau L.F."/>
            <person name="Lazarevic D."/>
            <person name="Lipovich L."/>
            <person name="Liu J."/>
            <person name="Liuni S."/>
            <person name="McWilliam S."/>
            <person name="Madan Babu M."/>
            <person name="Madera M."/>
            <person name="Marchionni L."/>
            <person name="Matsuda H."/>
            <person name="Matsuzawa S."/>
            <person name="Miki H."/>
            <person name="Mignone F."/>
            <person name="Miyake S."/>
            <person name="Morris K."/>
            <person name="Mottagui-Tabar S."/>
            <person name="Mulder N."/>
            <person name="Nakano N."/>
            <person name="Nakauchi H."/>
            <person name="Ng P."/>
            <person name="Nilsson R."/>
            <person name="Nishiguchi S."/>
            <person name="Nishikawa S."/>
            <person name="Nori F."/>
            <person name="Ohara O."/>
            <person name="Okazaki Y."/>
            <person name="Orlando V."/>
            <person name="Pang K.C."/>
            <person name="Pavan W.J."/>
            <person name="Pavesi G."/>
            <person name="Pesole G."/>
            <person name="Petrovsky N."/>
            <person name="Piazza S."/>
            <person name="Reed J."/>
            <person name="Reid J.F."/>
            <person name="Ring B.Z."/>
            <person name="Ringwald M."/>
            <person name="Rost B."/>
            <person name="Ruan Y."/>
            <person name="Salzberg S.L."/>
            <person name="Sandelin A."/>
            <person name="Schneider C."/>
            <person name="Schoenbach C."/>
            <person name="Sekiguchi K."/>
            <person name="Semple C.A."/>
            <person name="Seno S."/>
            <person name="Sessa L."/>
            <person name="Sheng Y."/>
            <person name="Shibata Y."/>
            <person name="Shimada H."/>
            <person name="Shimada K."/>
            <person name="Silva D."/>
            <person name="Sinclair B."/>
            <person name="Sperling S."/>
            <person name="Stupka E."/>
            <person name="Sugiura K."/>
            <person name="Sultana R."/>
            <person name="Takenaka Y."/>
            <person name="Taki K."/>
            <person name="Tammoja K."/>
            <person name="Tan S.L."/>
            <person name="Tang S."/>
            <person name="Taylor M.S."/>
            <person name="Tegner J."/>
            <person name="Teichmann S.A."/>
            <person name="Ueda H.R."/>
            <person name="van Nimwegen E."/>
            <person name="Verardo R."/>
            <person name="Wei C.L."/>
            <person name="Yagi K."/>
            <person name="Yamanishi H."/>
            <person name="Zabarovsky E."/>
            <person name="Zhu S."/>
            <person name="Zimmer A."/>
            <person name="Hide W."/>
            <person name="Bult C."/>
            <person name="Grimmond S.M."/>
            <person name="Teasdale R.D."/>
            <person name="Liu E.T."/>
            <person name="Brusic V."/>
            <person name="Quackenbush J."/>
            <person name="Wahlestedt C."/>
            <person name="Mattick J.S."/>
            <person name="Hume D.A."/>
            <person name="Kai C."/>
            <person name="Sasaki D."/>
            <person name="Tomaru Y."/>
            <person name="Fukuda S."/>
            <person name="Kanamori-Katayama M."/>
            <person name="Suzuki M."/>
            <person name="Aoki J."/>
            <person name="Arakawa T."/>
            <person name="Iida J."/>
            <person name="Imamura K."/>
            <person name="Itoh M."/>
            <person name="Kato T."/>
            <person name="Kawaji H."/>
            <person name="Kawagashira N."/>
            <person name="Kawashima T."/>
            <person name="Kojima M."/>
            <person name="Kondo S."/>
            <person name="Konno H."/>
            <person name="Nakano K."/>
            <person name="Ninomiya N."/>
            <person name="Nishio T."/>
            <person name="Okada M."/>
            <person name="Plessy C."/>
            <person name="Shibata K."/>
            <person name="Shiraki T."/>
            <person name="Suzuki S."/>
            <person name="Tagami M."/>
            <person name="Waki K."/>
            <person name="Watahiki A."/>
            <person name="Okamura-Oho Y."/>
            <person name="Suzuki H."/>
            <person name="Kawai J."/>
            <person name="Hayashizaki Y."/>
        </authorList>
    </citation>
    <scope>NUCLEOTIDE SEQUENCE [LARGE SCALE MRNA] OF 512-756</scope>
    <source>
        <strain>C57BL/6J</strain>
        <tissue>Corpora quadrigemina</tissue>
    </source>
</reference>
<reference key="3">
    <citation type="journal article" date="2004" name="Proc. Natl. Acad. Sci. U.S.A.">
        <title>The mouse juvenile spermatogonial depletion (jsd) phenotype is due to a mutation in the X-derived retrogene, mUtp14b.</title>
        <authorList>
            <person name="Rohozinski J."/>
            <person name="Bishop C.E."/>
        </authorList>
    </citation>
    <scope>FUNCTION</scope>
    <scope>TISSUE SPECIFICITY</scope>
    <scope>GENOMIC ORGANIZATION</scope>
    <scope>CHROMOSOMAL LOCATION</scope>
</reference>
<reference key="4">
    <citation type="journal article" date="2010" name="Cell">
        <title>A tissue-specific atlas of mouse protein phosphorylation and expression.</title>
        <authorList>
            <person name="Huttlin E.L."/>
            <person name="Jedrychowski M.P."/>
            <person name="Elias J.E."/>
            <person name="Goswami T."/>
            <person name="Rad R."/>
            <person name="Beausoleil S.A."/>
            <person name="Villen J."/>
            <person name="Haas W."/>
            <person name="Sowa M.E."/>
            <person name="Gygi S.P."/>
        </authorList>
    </citation>
    <scope>PHOSPHORYLATION [LARGE SCALE ANALYSIS] AT SER-554</scope>
    <scope>IDENTIFICATION BY MASS SPECTROMETRY [LARGE SCALE ANALYSIS]</scope>
    <source>
        <tissue>Testis</tissue>
    </source>
</reference>
<sequence length="756" mass="85928">MNMARNVTDLLALSQQEELVDLPENYPLSTSEDEGDSDGEGKRQKLLEAVSSLGRKNKWKLAERSEASRMVSEFNVTSEGSGEKLVLSDLLGSATALSSVAAVKKQLHRVKSKTLTPPLNKEEADRALREAAFSKTSQMLSRWDPVVLKNRQAEQLIFPMEKEPPAVAPIEHVFTDWKVRTPLEQEVFNLLHKNKQPVTDPLLTPVETASIRAMSLEEAKIRRAELQRMRALQSYYEARARREKRIKSKKYHRALKKGKAKKALKEFEELWKDCPNAALQELEKMEKARMTERMSLKHQGSGKWAKSKAIMAKYDPEARKAMQEQLAKNRELTQKLQVVSESEEEDGCTEEGIVSVSHGMDDLQMNADGVNPWMLSSCNSNAKRGEIKTDPEQMPEFVAHVSSESEGDERPVAEELVLKERSFQERVDPNNAKLMDGQETEDSDSQEVLQKLNKESHQSDNQKVSSEENVLHIQREDLASEKLLVLQRLERAHVLEQQGELSKEEHYPKKGLSRPLLKGDWKEMKPLTNPDASGGKKKKEQMIDLRNLLTANSSPVRSLAVPTIQQLEDEVETDHKQLIREAFAGDDVIREFLKEKREAIETNKPKDLDLSLPGWGEWVGMGLKPSAKKRRRFLIKAPESSPRKDKNLPNVIISEKRNIHAAAHQVRALPHPFTHQQQFERTIQNPIGYMWNTQRTFQKLTVPKVGTKLGHIIKPIKAENVGYCSSTRSDLSILQSSQKCLSRKQQKQLKKLSSAD</sequence>
<evidence type="ECO:0000250" key="1"/>
<evidence type="ECO:0000250" key="2">
    <source>
        <dbReference type="UniProtKB" id="Q640M1"/>
    </source>
</evidence>
<evidence type="ECO:0000255" key="3"/>
<evidence type="ECO:0000256" key="4">
    <source>
        <dbReference type="SAM" id="MobiDB-lite"/>
    </source>
</evidence>
<evidence type="ECO:0000269" key="5">
    <source>
    </source>
</evidence>
<evidence type="ECO:0000269" key="6">
    <source>
    </source>
</evidence>
<evidence type="ECO:0000305" key="7"/>
<evidence type="ECO:0007744" key="8">
    <source>
    </source>
</evidence>
<protein>
    <recommendedName>
        <fullName>U3 small nucleolar RNA-associated protein 14 homolog B</fullName>
    </recommendedName>
    <alternativeName>
        <fullName>Juvenile spermatogonial depletion protein</fullName>
    </alternativeName>
</protein>
<keyword id="KW-0175">Coiled coil</keyword>
<keyword id="KW-0217">Developmental protein</keyword>
<keyword id="KW-0221">Differentiation</keyword>
<keyword id="KW-0469">Meiosis</keyword>
<keyword id="KW-0539">Nucleus</keyword>
<keyword id="KW-0597">Phosphoprotein</keyword>
<keyword id="KW-1185">Reference proteome</keyword>
<keyword id="KW-0690">Ribosome biogenesis</keyword>
<keyword id="KW-0744">Spermatogenesis</keyword>
<comment type="function">
    <text evidence="5 6">Essential for spermatogenesis. May be required specifically for ribosome biogenesis and hence protein synthesis during male meiosis.</text>
</comment>
<comment type="subcellular location">
    <subcellularLocation>
        <location evidence="1">Nucleus</location>
        <location evidence="1">Nucleolus</location>
    </subcellularLocation>
</comment>
<comment type="tissue specificity">
    <text evidence="5 6">Expressed predominantly in germ cells of the testis; weakly expressed in brain.</text>
</comment>
<comment type="miscellaneous">
    <text>Apparently encoded by an autosomal retrotransposed copy of the X-linked gene Utp14a. Evolution of autosomal retrogenes from X-linked progenitors compensates for X-chromosome silencing during male meiosis.</text>
</comment>
<comment type="similarity">
    <text evidence="7">Belongs to the UTP14 family.</text>
</comment>
<comment type="sequence caution" evidence="7">
    <conflict type="erroneous initiation">
        <sequence resource="EMBL-CDS" id="AAQ87009"/>
    </conflict>
</comment>
<organism>
    <name type="scientific">Mus musculus</name>
    <name type="common">Mouse</name>
    <dbReference type="NCBI Taxonomy" id="10090"/>
    <lineage>
        <taxon>Eukaryota</taxon>
        <taxon>Metazoa</taxon>
        <taxon>Chordata</taxon>
        <taxon>Craniata</taxon>
        <taxon>Vertebrata</taxon>
        <taxon>Euteleostomi</taxon>
        <taxon>Mammalia</taxon>
        <taxon>Eutheria</taxon>
        <taxon>Euarchontoglires</taxon>
        <taxon>Glires</taxon>
        <taxon>Rodentia</taxon>
        <taxon>Myomorpha</taxon>
        <taxon>Muroidea</taxon>
        <taxon>Muridae</taxon>
        <taxon>Murinae</taxon>
        <taxon>Mus</taxon>
        <taxon>Mus</taxon>
    </lineage>
</organism>
<gene>
    <name type="primary">Utp14b</name>
    <name type="synonym">Jsd</name>
</gene>
<dbReference type="EMBL" id="AY316161">
    <property type="protein sequence ID" value="AAQ87009.1"/>
    <property type="status" value="ALT_INIT"/>
    <property type="molecule type" value="mRNA"/>
</dbReference>
<dbReference type="EMBL" id="AY316162">
    <property type="protein sequence ID" value="AAQ87010.1"/>
    <property type="molecule type" value="mRNA"/>
</dbReference>
<dbReference type="EMBL" id="AK046254">
    <property type="protein sequence ID" value="BAC32659.1"/>
    <property type="molecule type" value="mRNA"/>
</dbReference>
<dbReference type="RefSeq" id="NP_001001981.2">
    <property type="nucleotide sequence ID" value="NM_001001981.3"/>
</dbReference>
<dbReference type="SMR" id="Q6EJB6"/>
<dbReference type="BioGRID" id="228836">
    <property type="interactions" value="12"/>
</dbReference>
<dbReference type="FunCoup" id="Q6EJB6">
    <property type="interactions" value="743"/>
</dbReference>
<dbReference type="STRING" id="10090.ENSMUSP00000052149"/>
<dbReference type="iPTMnet" id="Q6EJB6"/>
<dbReference type="PhosphoSitePlus" id="Q6EJB6"/>
<dbReference type="jPOST" id="Q6EJB6"/>
<dbReference type="PaxDb" id="10090-ENSMUSP00000052149"/>
<dbReference type="PeptideAtlas" id="Q6EJB6"/>
<dbReference type="ProteomicsDB" id="297945"/>
<dbReference type="DNASU" id="195434"/>
<dbReference type="GeneID" id="195434"/>
<dbReference type="KEGG" id="mmu:195434"/>
<dbReference type="AGR" id="MGI:2445092"/>
<dbReference type="CTD" id="195434"/>
<dbReference type="MGI" id="MGI:2445092">
    <property type="gene designation" value="Utp14b"/>
</dbReference>
<dbReference type="eggNOG" id="KOG2172">
    <property type="taxonomic scope" value="Eukaryota"/>
</dbReference>
<dbReference type="InParanoid" id="Q6EJB6"/>
<dbReference type="OrthoDB" id="277439at2759"/>
<dbReference type="PhylomeDB" id="Q6EJB6"/>
<dbReference type="Reactome" id="R-MMU-6791226">
    <property type="pathway name" value="Major pathway of rRNA processing in the nucleolus and cytosol"/>
</dbReference>
<dbReference type="BioGRID-ORCS" id="195434">
    <property type="hits" value="3 hits in 80 CRISPR screens"/>
</dbReference>
<dbReference type="PRO" id="PR:Q6EJB6"/>
<dbReference type="Proteomes" id="UP000000589">
    <property type="component" value="Unplaced"/>
</dbReference>
<dbReference type="RNAct" id="Q6EJB6">
    <property type="molecule type" value="protein"/>
</dbReference>
<dbReference type="GO" id="GO:0005730">
    <property type="term" value="C:nucleolus"/>
    <property type="evidence" value="ECO:0007669"/>
    <property type="project" value="UniProtKB-SubCell"/>
</dbReference>
<dbReference type="GO" id="GO:0032040">
    <property type="term" value="C:small-subunit processome"/>
    <property type="evidence" value="ECO:0007669"/>
    <property type="project" value="InterPro"/>
</dbReference>
<dbReference type="GO" id="GO:0030154">
    <property type="term" value="P:cell differentiation"/>
    <property type="evidence" value="ECO:0007669"/>
    <property type="project" value="UniProtKB-KW"/>
</dbReference>
<dbReference type="GO" id="GO:0051321">
    <property type="term" value="P:meiotic cell cycle"/>
    <property type="evidence" value="ECO:0007669"/>
    <property type="project" value="UniProtKB-KW"/>
</dbReference>
<dbReference type="GO" id="GO:0006364">
    <property type="term" value="P:rRNA processing"/>
    <property type="evidence" value="ECO:0007669"/>
    <property type="project" value="InterPro"/>
</dbReference>
<dbReference type="GO" id="GO:0007283">
    <property type="term" value="P:spermatogenesis"/>
    <property type="evidence" value="ECO:0000315"/>
    <property type="project" value="MGI"/>
</dbReference>
<dbReference type="InterPro" id="IPR006709">
    <property type="entry name" value="SSU_processome_Utp14"/>
</dbReference>
<dbReference type="PANTHER" id="PTHR14150">
    <property type="entry name" value="U3 SMALL NUCLEOLAR RNA-ASSOCIATED PROTEIN 14"/>
    <property type="match status" value="1"/>
</dbReference>
<dbReference type="PANTHER" id="PTHR14150:SF20">
    <property type="entry name" value="U3 SMALL NUCLEOLAR RNA-ASSOCIATED PROTEIN 14 HOMOLOG B"/>
    <property type="match status" value="1"/>
</dbReference>
<dbReference type="Pfam" id="PF04615">
    <property type="entry name" value="Utp14"/>
    <property type="match status" value="1"/>
</dbReference>
<name>UT14B_MOUSE</name>